<comment type="function">
    <text evidence="2">This protein catalyzes the committed step to the synthesis of the acidic phospholipids.</text>
</comment>
<comment type="catalytic activity">
    <reaction>
        <text>a CDP-1,2-diacyl-sn-glycerol + sn-glycerol 3-phosphate = a 1,2-diacyl-sn-glycero-3-phospho-(1'-sn-glycero-3'-phosphate) + CMP + H(+)</text>
        <dbReference type="Rhea" id="RHEA:12593"/>
        <dbReference type="ChEBI" id="CHEBI:15378"/>
        <dbReference type="ChEBI" id="CHEBI:57597"/>
        <dbReference type="ChEBI" id="CHEBI:58332"/>
        <dbReference type="ChEBI" id="CHEBI:60110"/>
        <dbReference type="ChEBI" id="CHEBI:60377"/>
        <dbReference type="EC" id="2.7.8.5"/>
    </reaction>
</comment>
<comment type="pathway">
    <text>Phospholipid metabolism; phosphatidylglycerol biosynthesis; phosphatidylglycerol from CDP-diacylglycerol: step 1/2.</text>
</comment>
<comment type="subcellular location">
    <subcellularLocation>
        <location evidence="2">Cell membrane</location>
        <topology evidence="2">Multi-pass membrane protein</topology>
    </subcellularLocation>
</comment>
<comment type="similarity">
    <text evidence="3">Belongs to the CDP-alcohol phosphatidyltransferase class-I family.</text>
</comment>
<comment type="sequence caution" evidence="3">
    <conflict type="erroneous initiation">
        <sequence resource="EMBL-CDS" id="AAC44003"/>
    </conflict>
</comment>
<name>PGSA_CERS4</name>
<accession>Q3IYX7</accession>
<accession>Q53090</accession>
<gene>
    <name type="primary">pgsA</name>
    <name type="ordered locus">RHOS4_26890</name>
    <name type="ORF">RSP_1073</name>
</gene>
<protein>
    <recommendedName>
        <fullName>CDP-diacylglycerol--glycerol-3-phosphate 3-phosphatidyltransferase</fullName>
        <ecNumber>2.7.8.5</ecNumber>
    </recommendedName>
    <alternativeName>
        <fullName>Phosphatidylglycerophosphate synthase</fullName>
        <shortName>PGP synthase</shortName>
    </alternativeName>
</protein>
<feature type="chain" id="PRO_0000239137" description="CDP-diacylglycerol--glycerol-3-phosphate 3-phosphatidyltransferase">
    <location>
        <begin position="1"/>
        <end position="221"/>
    </location>
</feature>
<feature type="transmembrane region" description="Helical" evidence="1">
    <location>
        <begin position="8"/>
        <end position="28"/>
    </location>
</feature>
<feature type="transmembrane region" description="Helical" evidence="1">
    <location>
        <begin position="34"/>
        <end position="54"/>
    </location>
</feature>
<feature type="transmembrane region" description="Helical" evidence="1">
    <location>
        <begin position="75"/>
        <end position="95"/>
    </location>
</feature>
<feature type="transmembrane region" description="Helical" evidence="1">
    <location>
        <begin position="133"/>
        <end position="153"/>
    </location>
</feature>
<feature type="transmembrane region" description="Helical" evidence="1">
    <location>
        <begin position="187"/>
        <end position="207"/>
    </location>
</feature>
<keyword id="KW-1003">Cell membrane</keyword>
<keyword id="KW-0444">Lipid biosynthesis</keyword>
<keyword id="KW-0443">Lipid metabolism</keyword>
<keyword id="KW-0472">Membrane</keyword>
<keyword id="KW-0594">Phospholipid biosynthesis</keyword>
<keyword id="KW-1208">Phospholipid metabolism</keyword>
<keyword id="KW-1185">Reference proteome</keyword>
<keyword id="KW-0808">Transferase</keyword>
<keyword id="KW-0812">Transmembrane</keyword>
<keyword id="KW-1133">Transmembrane helix</keyword>
<proteinExistence type="inferred from homology"/>
<reference key="1">
    <citation type="journal article" date="1996" name="J. Bacteriol.">
        <title>Isolation and expression of the Rhodobacter sphaeroides gene (pgsA) encoding phosphatidylglycerophosphate synthase.</title>
        <authorList>
            <person name="Dryden S.C."/>
            <person name="Dowhan W."/>
        </authorList>
    </citation>
    <scope>NUCLEOTIDE SEQUENCE [GENOMIC DNA]</scope>
    <scope>FUNCTION</scope>
    <scope>SUBCELLULAR LOCATION</scope>
</reference>
<reference key="2">
    <citation type="submission" date="2005-09" db="EMBL/GenBank/DDBJ databases">
        <title>Complete sequence of chromosome 1 of Rhodobacter sphaeroides 2.4.1.</title>
        <authorList>
            <person name="Copeland A."/>
            <person name="Lucas S."/>
            <person name="Lapidus A."/>
            <person name="Barry K."/>
            <person name="Detter J.C."/>
            <person name="Glavina T."/>
            <person name="Hammon N."/>
            <person name="Israni S."/>
            <person name="Pitluck S."/>
            <person name="Richardson P."/>
            <person name="Mackenzie C."/>
            <person name="Choudhary M."/>
            <person name="Larimer F."/>
            <person name="Hauser L.J."/>
            <person name="Land M."/>
            <person name="Donohue T.J."/>
            <person name="Kaplan S."/>
        </authorList>
    </citation>
    <scope>NUCLEOTIDE SEQUENCE [LARGE SCALE GENOMIC DNA]</scope>
    <source>
        <strain>ATCC 17023 / DSM 158 / JCM 6121 / CCUG 31486 / LMG 2827 / NBRC 12203 / NCIMB 8253 / ATH 2.4.1.</strain>
    </source>
</reference>
<evidence type="ECO:0000255" key="1"/>
<evidence type="ECO:0000269" key="2">
    <source>
    </source>
</evidence>
<evidence type="ECO:0000305" key="3"/>
<dbReference type="EC" id="2.7.8.5"/>
<dbReference type="EMBL" id="U29587">
    <property type="protein sequence ID" value="AAC44003.1"/>
    <property type="status" value="ALT_INIT"/>
    <property type="molecule type" value="Genomic_DNA"/>
</dbReference>
<dbReference type="EMBL" id="CP000143">
    <property type="protein sequence ID" value="ABA80257.1"/>
    <property type="molecule type" value="Genomic_DNA"/>
</dbReference>
<dbReference type="RefSeq" id="WP_002721439.1">
    <property type="nucleotide sequence ID" value="NZ_CP030271.1"/>
</dbReference>
<dbReference type="RefSeq" id="YP_354158.1">
    <property type="nucleotide sequence ID" value="NC_007493.2"/>
</dbReference>
<dbReference type="SMR" id="Q3IYX7"/>
<dbReference type="STRING" id="272943.RSP_1073"/>
<dbReference type="EnsemblBacteria" id="ABA80257">
    <property type="protein sequence ID" value="ABA80257"/>
    <property type="gene ID" value="RSP_1073"/>
</dbReference>
<dbReference type="GeneID" id="67447847"/>
<dbReference type="KEGG" id="rsp:RSP_1073"/>
<dbReference type="PATRIC" id="fig|272943.9.peg.3047"/>
<dbReference type="eggNOG" id="COG0558">
    <property type="taxonomic scope" value="Bacteria"/>
</dbReference>
<dbReference type="OrthoDB" id="9796672at2"/>
<dbReference type="PhylomeDB" id="Q3IYX7"/>
<dbReference type="UniPathway" id="UPA00084">
    <property type="reaction ID" value="UER00503"/>
</dbReference>
<dbReference type="Proteomes" id="UP000002703">
    <property type="component" value="Chromosome 1"/>
</dbReference>
<dbReference type="GO" id="GO:0005886">
    <property type="term" value="C:plasma membrane"/>
    <property type="evidence" value="ECO:0007669"/>
    <property type="project" value="UniProtKB-SubCell"/>
</dbReference>
<dbReference type="GO" id="GO:0008444">
    <property type="term" value="F:CDP-diacylglycerol-glycerol-3-phosphate 3-phosphatidyltransferase activity"/>
    <property type="evidence" value="ECO:0007669"/>
    <property type="project" value="UniProtKB-EC"/>
</dbReference>
<dbReference type="GO" id="GO:0006655">
    <property type="term" value="P:phosphatidylglycerol biosynthetic process"/>
    <property type="evidence" value="ECO:0007669"/>
    <property type="project" value="UniProtKB-UniPathway"/>
</dbReference>
<dbReference type="Gene3D" id="1.20.120.1760">
    <property type="match status" value="1"/>
</dbReference>
<dbReference type="InterPro" id="IPR050324">
    <property type="entry name" value="CDP-alcohol_PTase-I"/>
</dbReference>
<dbReference type="InterPro" id="IPR000462">
    <property type="entry name" value="CDP-OH_P_trans"/>
</dbReference>
<dbReference type="InterPro" id="IPR043130">
    <property type="entry name" value="CDP-OH_PTrfase_TM_dom"/>
</dbReference>
<dbReference type="InterPro" id="IPR048254">
    <property type="entry name" value="CDP_ALCOHOL_P_TRANSF_CS"/>
</dbReference>
<dbReference type="InterPro" id="IPR004570">
    <property type="entry name" value="Phosphatidylglycerol_P_synth"/>
</dbReference>
<dbReference type="NCBIfam" id="TIGR00560">
    <property type="entry name" value="pgsA"/>
    <property type="match status" value="1"/>
</dbReference>
<dbReference type="PANTHER" id="PTHR14269:SF62">
    <property type="entry name" value="CDP-DIACYLGLYCEROL--GLYCEROL-3-PHOSPHATE 3-PHOSPHATIDYLTRANSFERASE 1, CHLOROPLASTIC"/>
    <property type="match status" value="1"/>
</dbReference>
<dbReference type="PANTHER" id="PTHR14269">
    <property type="entry name" value="CDP-DIACYLGLYCEROL--GLYCEROL-3-PHOSPHATE 3-PHOSPHATIDYLTRANSFERASE-RELATED"/>
    <property type="match status" value="1"/>
</dbReference>
<dbReference type="Pfam" id="PF01066">
    <property type="entry name" value="CDP-OH_P_transf"/>
    <property type="match status" value="1"/>
</dbReference>
<dbReference type="PIRSF" id="PIRSF000847">
    <property type="entry name" value="Phos_ph_gly_syn"/>
    <property type="match status" value="1"/>
</dbReference>
<dbReference type="PROSITE" id="PS00379">
    <property type="entry name" value="CDP_ALCOHOL_P_TRANSF"/>
    <property type="match status" value="1"/>
</dbReference>
<organism>
    <name type="scientific">Cereibacter sphaeroides (strain ATCC 17023 / DSM 158 / JCM 6121 / CCUG 31486 / LMG 2827 / NBRC 12203 / NCIMB 8253 / ATH 2.4.1.)</name>
    <name type="common">Rhodobacter sphaeroides</name>
    <dbReference type="NCBI Taxonomy" id="272943"/>
    <lineage>
        <taxon>Bacteria</taxon>
        <taxon>Pseudomonadati</taxon>
        <taxon>Pseudomonadota</taxon>
        <taxon>Alphaproteobacteria</taxon>
        <taxon>Rhodobacterales</taxon>
        <taxon>Paracoccaceae</taxon>
        <taxon>Cereibacter</taxon>
    </lineage>
</organism>
<sequence length="221" mass="24683">MNWSIPNILTVLRLLAAPGVAVMFLYFHRPWADWFALTLFILAAVTDFFDGYLARLWKQESKFGAMLDPIADKAMVVIALVIITGYSGMNPWLILPVTLILFREVFVSGLREFLGAKASLLKVTKLAKWKTTAQMVAIAILFLGTGLEHLEGIARQGMTWEQYARAVSAGEADPIRSCGMHGCSSYATWLGLALIWIAAALTFITGWDYFRKALPYLKDEK</sequence>